<gene>
    <name type="primary">hlgC</name>
    <name type="ordered locus">SAOUHSC_02709</name>
</gene>
<sequence>MLKNKILTTTLSVSLLAPLANPLLENAKAANDTEDIGKGSDIEIIKRTEDKTSNKWGVTQNIQFDFVKDKKYNKDALILKMQGFISSRTTYYNYKKTNHVKAMRWPFQYNIGLKTNDKYVSLINYLPKNKIESTNVSQTLGYNIGGNFQSAPSLGGNGSFNYSKSISYTQQNYVSEVEQQNSKSVLWGVKANSFATESGQKSAFDSDLFVGYKPHSKDPRDYFVPDSELPPLVQSGFNPSFIATVSHEKGSSDTSEFEITYGRNMDVTHAIKRSTHYGNSYLDGHRVHNAFVNRNYTVKYEVNWKTHEIKVKGQN</sequence>
<reference key="1">
    <citation type="book" date="2006" name="Gram positive pathogens, 2nd edition">
        <title>The Staphylococcus aureus NCTC 8325 genome.</title>
        <editorList>
            <person name="Fischetti V."/>
            <person name="Novick R."/>
            <person name="Ferretti J."/>
            <person name="Portnoy D."/>
            <person name="Rood J."/>
        </editorList>
        <authorList>
            <person name="Gillaspy A.F."/>
            <person name="Worrell V."/>
            <person name="Orvis J."/>
            <person name="Roe B.A."/>
            <person name="Dyer D.W."/>
            <person name="Iandolo J.J."/>
        </authorList>
    </citation>
    <scope>NUCLEOTIDE SEQUENCE [LARGE SCALE GENOMIC DNA]</scope>
    <source>
        <strain>NCTC 8325 / PS 47</strain>
    </source>
</reference>
<reference key="2">
    <citation type="journal article" date="2010" name="J. Bacteriol.">
        <title>Synthetic effects of secG and secY2 mutations on exoproteome biogenesis in Staphylococcus aureus.</title>
        <authorList>
            <person name="Sibbald M.J."/>
            <person name="Winter T."/>
            <person name="van der Kooi-Pol M.M."/>
            <person name="Buist G."/>
            <person name="Tsompanidou E."/>
            <person name="Bosma T."/>
            <person name="Schafer T."/>
            <person name="Ohlsen K."/>
            <person name="Hecker M."/>
            <person name="Antelmann H."/>
            <person name="Engelmann S."/>
            <person name="van Dijl J.M."/>
        </authorList>
    </citation>
    <scope>IDENTIFICATION BY MASS SPECTROMETRY</scope>
    <scope>SUBCELLULAR LOCATION</scope>
    <scope>INDUCTION</scope>
    <source>
        <strain>RN4220</strain>
    </source>
</reference>
<evidence type="ECO:0000250" key="1"/>
<evidence type="ECO:0000255" key="2"/>
<evidence type="ECO:0000269" key="3">
    <source>
    </source>
</evidence>
<evidence type="ECO:0000305" key="4"/>
<comment type="function">
    <text evidence="1">Toxin that seems to act by forming pores in the membrane of the cell. Has a hemolytic and a leucotoxic activity (By similarity).</text>
</comment>
<comment type="subunit">
    <text evidence="1">Toxicity requires sequential binding and synergistic association of a class S and a class F component which form heterooligomeric complexes. HlgB (class F) associates with either hlgA thus forming an AB toxin or with hlgC thus forming a CB toxin (By similarity).</text>
</comment>
<comment type="subcellular location">
    <subcellularLocation>
        <location evidence="3">Secreted</location>
    </subcellularLocation>
</comment>
<comment type="induction">
    <text evidence="3">Less protein is secreted in a secG or double secG/secY2 mutant (at protein level).</text>
</comment>
<comment type="similarity">
    <text evidence="4">Belongs to the aerolysin family.</text>
</comment>
<keyword id="KW-0204">Cytolysis</keyword>
<keyword id="KW-0354">Hemolysis</keyword>
<keyword id="KW-1185">Reference proteome</keyword>
<keyword id="KW-0964">Secreted</keyword>
<keyword id="KW-0732">Signal</keyword>
<keyword id="KW-0800">Toxin</keyword>
<keyword id="KW-0843">Virulence</keyword>
<name>HLGC_STAA8</name>
<protein>
    <recommendedName>
        <fullName>Gamma-hemolysin component C</fullName>
    </recommendedName>
    <alternativeName>
        <fullName>Leukocidin s subunit</fullName>
    </alternativeName>
</protein>
<accession>Q2FVK2</accession>
<proteinExistence type="evidence at protein level"/>
<feature type="signal peptide" evidence="2">
    <location>
        <begin position="1"/>
        <end position="29"/>
    </location>
</feature>
<feature type="chain" id="PRO_0000414602" description="Gamma-hemolysin component C">
    <location>
        <begin position="30"/>
        <end position="315"/>
    </location>
</feature>
<dbReference type="EMBL" id="CP000253">
    <property type="protein sequence ID" value="ABD31717.1"/>
    <property type="molecule type" value="Genomic_DNA"/>
</dbReference>
<dbReference type="RefSeq" id="WP_000916713.1">
    <property type="nucleotide sequence ID" value="NZ_LS483365.1"/>
</dbReference>
<dbReference type="RefSeq" id="YP_501171.1">
    <property type="nucleotide sequence ID" value="NC_007795.1"/>
</dbReference>
<dbReference type="SMR" id="Q2FVK2"/>
<dbReference type="STRING" id="93061.SAOUHSC_02709"/>
<dbReference type="PaxDb" id="1280-SAXN108_2676"/>
<dbReference type="GeneID" id="3919728"/>
<dbReference type="KEGG" id="sao:SAOUHSC_02709"/>
<dbReference type="PATRIC" id="fig|93061.5.peg.2453"/>
<dbReference type="eggNOG" id="ENOG5030531">
    <property type="taxonomic scope" value="Bacteria"/>
</dbReference>
<dbReference type="HOGENOM" id="CLU_075311_0_0_9"/>
<dbReference type="OrthoDB" id="2402866at2"/>
<dbReference type="PRO" id="PR:Q2FVK2"/>
<dbReference type="Proteomes" id="UP000008816">
    <property type="component" value="Chromosome"/>
</dbReference>
<dbReference type="GO" id="GO:0005576">
    <property type="term" value="C:extracellular region"/>
    <property type="evidence" value="ECO:0007669"/>
    <property type="project" value="UniProtKB-SubCell"/>
</dbReference>
<dbReference type="GO" id="GO:0090729">
    <property type="term" value="F:toxin activity"/>
    <property type="evidence" value="ECO:0007669"/>
    <property type="project" value="UniProtKB-KW"/>
</dbReference>
<dbReference type="GO" id="GO:0051715">
    <property type="term" value="P:cytolysis in another organism"/>
    <property type="evidence" value="ECO:0007669"/>
    <property type="project" value="InterPro"/>
</dbReference>
<dbReference type="Gene3D" id="2.70.240.10">
    <property type="entry name" value="Leukocidin/porin MspA"/>
    <property type="match status" value="1"/>
</dbReference>
<dbReference type="InterPro" id="IPR003963">
    <property type="entry name" value="Bi-component_toxin_staph"/>
</dbReference>
<dbReference type="InterPro" id="IPR016183">
    <property type="entry name" value="Leukocidin/Hemolysin_toxin"/>
</dbReference>
<dbReference type="InterPro" id="IPR036435">
    <property type="entry name" value="Leukocidin/porin_MspA_sf"/>
</dbReference>
<dbReference type="NCBIfam" id="TIGR01002">
    <property type="entry name" value="hlyII"/>
    <property type="match status" value="1"/>
</dbReference>
<dbReference type="Pfam" id="PF07968">
    <property type="entry name" value="Leukocidin"/>
    <property type="match status" value="1"/>
</dbReference>
<dbReference type="PRINTS" id="PR01468">
    <property type="entry name" value="BICOMPNTOXIN"/>
</dbReference>
<dbReference type="SUPFAM" id="SSF56959">
    <property type="entry name" value="Leukocidin-like"/>
    <property type="match status" value="1"/>
</dbReference>
<organism>
    <name type="scientific">Staphylococcus aureus (strain NCTC 8325 / PS 47)</name>
    <dbReference type="NCBI Taxonomy" id="93061"/>
    <lineage>
        <taxon>Bacteria</taxon>
        <taxon>Bacillati</taxon>
        <taxon>Bacillota</taxon>
        <taxon>Bacilli</taxon>
        <taxon>Bacillales</taxon>
        <taxon>Staphylococcaceae</taxon>
        <taxon>Staphylococcus</taxon>
    </lineage>
</organism>